<evidence type="ECO:0000255" key="1">
    <source>
        <dbReference type="HAMAP-Rule" id="MF_00463"/>
    </source>
</evidence>
<dbReference type="EC" id="7.-.-.-" evidence="1"/>
<dbReference type="EMBL" id="AM933173">
    <property type="protein sequence ID" value="CAR37519.1"/>
    <property type="molecule type" value="Genomic_DNA"/>
</dbReference>
<dbReference type="RefSeq" id="WP_001092600.1">
    <property type="nucleotide sequence ID" value="NC_011274.1"/>
</dbReference>
<dbReference type="SMR" id="B5RAK1"/>
<dbReference type="KEGG" id="seg:SG1660"/>
<dbReference type="HOGENOM" id="CLU_063448_2_0_6"/>
<dbReference type="Proteomes" id="UP000008321">
    <property type="component" value="Chromosome"/>
</dbReference>
<dbReference type="GO" id="GO:0005886">
    <property type="term" value="C:plasma membrane"/>
    <property type="evidence" value="ECO:0007669"/>
    <property type="project" value="UniProtKB-SubCell"/>
</dbReference>
<dbReference type="GO" id="GO:0051539">
    <property type="term" value="F:4 iron, 4 sulfur cluster binding"/>
    <property type="evidence" value="ECO:0007669"/>
    <property type="project" value="UniProtKB-UniRule"/>
</dbReference>
<dbReference type="GO" id="GO:0009055">
    <property type="term" value="F:electron transfer activity"/>
    <property type="evidence" value="ECO:0007669"/>
    <property type="project" value="InterPro"/>
</dbReference>
<dbReference type="GO" id="GO:0046872">
    <property type="term" value="F:metal ion binding"/>
    <property type="evidence" value="ECO:0007669"/>
    <property type="project" value="UniProtKB-KW"/>
</dbReference>
<dbReference type="GO" id="GO:0022900">
    <property type="term" value="P:electron transport chain"/>
    <property type="evidence" value="ECO:0007669"/>
    <property type="project" value="UniProtKB-UniRule"/>
</dbReference>
<dbReference type="FunFam" id="1.10.15.40:FF:000001">
    <property type="entry name" value="Ion-translocating oxidoreductase complex subunit B"/>
    <property type="match status" value="1"/>
</dbReference>
<dbReference type="Gene3D" id="3.30.70.20">
    <property type="match status" value="1"/>
</dbReference>
<dbReference type="Gene3D" id="1.10.15.40">
    <property type="entry name" value="Electron transport complex subunit B, putative Fe-S cluster"/>
    <property type="match status" value="1"/>
</dbReference>
<dbReference type="HAMAP" id="MF_00463">
    <property type="entry name" value="RsxB_RnfB"/>
    <property type="match status" value="1"/>
</dbReference>
<dbReference type="InterPro" id="IPR007202">
    <property type="entry name" value="4Fe-4S_dom"/>
</dbReference>
<dbReference type="InterPro" id="IPR017896">
    <property type="entry name" value="4Fe4S_Fe-S-bd"/>
</dbReference>
<dbReference type="InterPro" id="IPR017900">
    <property type="entry name" value="4Fe4S_Fe_S_CS"/>
</dbReference>
<dbReference type="InterPro" id="IPR050395">
    <property type="entry name" value="4Fe4S_Ferredoxin_RnfB"/>
</dbReference>
<dbReference type="InterPro" id="IPR010207">
    <property type="entry name" value="Elect_transpt_cplx_RnfB/RsxB"/>
</dbReference>
<dbReference type="InterPro" id="IPR016463">
    <property type="entry name" value="RnfB/RsxB_Proteobac"/>
</dbReference>
<dbReference type="NCBIfam" id="NF003475">
    <property type="entry name" value="PRK05113.1"/>
    <property type="match status" value="1"/>
</dbReference>
<dbReference type="NCBIfam" id="TIGR01944">
    <property type="entry name" value="rnfB"/>
    <property type="match status" value="1"/>
</dbReference>
<dbReference type="PANTHER" id="PTHR43560">
    <property type="entry name" value="ION-TRANSLOCATING OXIDOREDUCTASE COMPLEX SUBUNIT B"/>
    <property type="match status" value="1"/>
</dbReference>
<dbReference type="PANTHER" id="PTHR43560:SF1">
    <property type="entry name" value="ION-TRANSLOCATING OXIDOREDUCTASE COMPLEX SUBUNIT B"/>
    <property type="match status" value="1"/>
</dbReference>
<dbReference type="Pfam" id="PF14697">
    <property type="entry name" value="Fer4_21"/>
    <property type="match status" value="1"/>
</dbReference>
<dbReference type="Pfam" id="PF04060">
    <property type="entry name" value="FeS"/>
    <property type="match status" value="1"/>
</dbReference>
<dbReference type="PIRSF" id="PIRSF005784">
    <property type="entry name" value="Elect_transpt_RnfB"/>
    <property type="match status" value="1"/>
</dbReference>
<dbReference type="SUPFAM" id="SSF54862">
    <property type="entry name" value="4Fe-4S ferredoxins"/>
    <property type="match status" value="1"/>
</dbReference>
<dbReference type="PROSITE" id="PS51656">
    <property type="entry name" value="4FE4S"/>
    <property type="match status" value="1"/>
</dbReference>
<dbReference type="PROSITE" id="PS00198">
    <property type="entry name" value="4FE4S_FER_1"/>
    <property type="match status" value="2"/>
</dbReference>
<dbReference type="PROSITE" id="PS51379">
    <property type="entry name" value="4FE4S_FER_2"/>
    <property type="match status" value="2"/>
</dbReference>
<sequence>MNTIWIAVGALTLLGLVFGAILGYASRRFAVEDDPVVEKIDAILPQSQCGQCGYPGCRPYAEAVGLQGEKINRCAPGGEAVMLKMAELLNVEPQPCDGEEQQAAPVRMLAVIDENNCIGCTKCIQACPVDAIVGATRAMHTVMSDLCTGCNLCVDPCPTHCIELRPVNETPDSWKWDLNTIPVRIIPVEQHA</sequence>
<organism>
    <name type="scientific">Salmonella gallinarum (strain 287/91 / NCTC 13346)</name>
    <dbReference type="NCBI Taxonomy" id="550538"/>
    <lineage>
        <taxon>Bacteria</taxon>
        <taxon>Pseudomonadati</taxon>
        <taxon>Pseudomonadota</taxon>
        <taxon>Gammaproteobacteria</taxon>
        <taxon>Enterobacterales</taxon>
        <taxon>Enterobacteriaceae</taxon>
        <taxon>Salmonella</taxon>
    </lineage>
</organism>
<feature type="chain" id="PRO_1000194494" description="Ion-translocating oxidoreductase complex subunit B">
    <location>
        <begin position="1"/>
        <end position="192"/>
    </location>
</feature>
<feature type="domain" description="4Fe-4S" evidence="1">
    <location>
        <begin position="32"/>
        <end position="91"/>
    </location>
</feature>
<feature type="domain" description="4Fe-4S ferredoxin-type 1" evidence="1">
    <location>
        <begin position="108"/>
        <end position="137"/>
    </location>
</feature>
<feature type="domain" description="4Fe-4S ferredoxin-type 2" evidence="1">
    <location>
        <begin position="138"/>
        <end position="167"/>
    </location>
</feature>
<feature type="region of interest" description="Hydrophobic" evidence="1">
    <location>
        <begin position="1"/>
        <end position="26"/>
    </location>
</feature>
<feature type="binding site" evidence="1">
    <location>
        <position position="49"/>
    </location>
    <ligand>
        <name>[4Fe-4S] cluster</name>
        <dbReference type="ChEBI" id="CHEBI:49883"/>
        <label>1</label>
    </ligand>
</feature>
<feature type="binding site" evidence="1">
    <location>
        <position position="52"/>
    </location>
    <ligand>
        <name>[4Fe-4S] cluster</name>
        <dbReference type="ChEBI" id="CHEBI:49883"/>
        <label>1</label>
    </ligand>
</feature>
<feature type="binding site" evidence="1">
    <location>
        <position position="57"/>
    </location>
    <ligand>
        <name>[4Fe-4S] cluster</name>
        <dbReference type="ChEBI" id="CHEBI:49883"/>
        <label>1</label>
    </ligand>
</feature>
<feature type="binding site" evidence="1">
    <location>
        <position position="74"/>
    </location>
    <ligand>
        <name>[4Fe-4S] cluster</name>
        <dbReference type="ChEBI" id="CHEBI:49883"/>
        <label>1</label>
    </ligand>
</feature>
<feature type="binding site" evidence="1">
    <location>
        <position position="117"/>
    </location>
    <ligand>
        <name>[4Fe-4S] cluster</name>
        <dbReference type="ChEBI" id="CHEBI:49883"/>
        <label>2</label>
    </ligand>
</feature>
<feature type="binding site" evidence="1">
    <location>
        <position position="120"/>
    </location>
    <ligand>
        <name>[4Fe-4S] cluster</name>
        <dbReference type="ChEBI" id="CHEBI:49883"/>
        <label>2</label>
    </ligand>
</feature>
<feature type="binding site" evidence="1">
    <location>
        <position position="123"/>
    </location>
    <ligand>
        <name>[4Fe-4S] cluster</name>
        <dbReference type="ChEBI" id="CHEBI:49883"/>
        <label>2</label>
    </ligand>
</feature>
<feature type="binding site" evidence="1">
    <location>
        <position position="127"/>
    </location>
    <ligand>
        <name>[4Fe-4S] cluster</name>
        <dbReference type="ChEBI" id="CHEBI:49883"/>
        <label>3</label>
    </ligand>
</feature>
<feature type="binding site" evidence="1">
    <location>
        <position position="147"/>
    </location>
    <ligand>
        <name>[4Fe-4S] cluster</name>
        <dbReference type="ChEBI" id="CHEBI:49883"/>
        <label>3</label>
    </ligand>
</feature>
<feature type="binding site" evidence="1">
    <location>
        <position position="150"/>
    </location>
    <ligand>
        <name>[4Fe-4S] cluster</name>
        <dbReference type="ChEBI" id="CHEBI:49883"/>
        <label>3</label>
    </ligand>
</feature>
<feature type="binding site" evidence="1">
    <location>
        <position position="153"/>
    </location>
    <ligand>
        <name>[4Fe-4S] cluster</name>
        <dbReference type="ChEBI" id="CHEBI:49883"/>
        <label>3</label>
    </ligand>
</feature>
<feature type="binding site" evidence="1">
    <location>
        <position position="157"/>
    </location>
    <ligand>
        <name>[4Fe-4S] cluster</name>
        <dbReference type="ChEBI" id="CHEBI:49883"/>
        <label>2</label>
    </ligand>
</feature>
<protein>
    <recommendedName>
        <fullName evidence="1">Ion-translocating oxidoreductase complex subunit B</fullName>
        <ecNumber evidence="1">7.-.-.-</ecNumber>
    </recommendedName>
    <alternativeName>
        <fullName evidence="1">Rsx electron transport complex subunit B</fullName>
    </alternativeName>
</protein>
<proteinExistence type="inferred from homology"/>
<name>RSXB_SALG2</name>
<gene>
    <name evidence="1" type="primary">rsxB</name>
    <name type="synonym">rnfB</name>
    <name type="ordered locus">SG1660</name>
</gene>
<comment type="function">
    <text evidence="1">Part of a membrane-bound complex that couples electron transfer with translocation of ions across the membrane. Required to maintain the reduced state of SoxR.</text>
</comment>
<comment type="cofactor">
    <cofactor evidence="1">
        <name>[4Fe-4S] cluster</name>
        <dbReference type="ChEBI" id="CHEBI:49883"/>
    </cofactor>
    <text evidence="1">Binds 3 [4Fe-4S] clusters.</text>
</comment>
<comment type="subunit">
    <text evidence="1">The complex is composed of six subunits: RsxA, RsxB, RsxC, RsxD, RsxE and RsxG.</text>
</comment>
<comment type="subcellular location">
    <subcellularLocation>
        <location evidence="1">Cell inner membrane</location>
    </subcellularLocation>
</comment>
<comment type="similarity">
    <text evidence="1">Belongs to the 4Fe4S bacterial-type ferredoxin family. RnfB subfamily.</text>
</comment>
<keyword id="KW-0004">4Fe-4S</keyword>
<keyword id="KW-0997">Cell inner membrane</keyword>
<keyword id="KW-1003">Cell membrane</keyword>
<keyword id="KW-0249">Electron transport</keyword>
<keyword id="KW-0408">Iron</keyword>
<keyword id="KW-0411">Iron-sulfur</keyword>
<keyword id="KW-0472">Membrane</keyword>
<keyword id="KW-0479">Metal-binding</keyword>
<keyword id="KW-0677">Repeat</keyword>
<keyword id="KW-1278">Translocase</keyword>
<keyword id="KW-0813">Transport</keyword>
<reference key="1">
    <citation type="journal article" date="2008" name="Genome Res.">
        <title>Comparative genome analysis of Salmonella enteritidis PT4 and Salmonella gallinarum 287/91 provides insights into evolutionary and host adaptation pathways.</title>
        <authorList>
            <person name="Thomson N.R."/>
            <person name="Clayton D.J."/>
            <person name="Windhorst D."/>
            <person name="Vernikos G."/>
            <person name="Davidson S."/>
            <person name="Churcher C."/>
            <person name="Quail M.A."/>
            <person name="Stevens M."/>
            <person name="Jones M.A."/>
            <person name="Watson M."/>
            <person name="Barron A."/>
            <person name="Layton A."/>
            <person name="Pickard D."/>
            <person name="Kingsley R.A."/>
            <person name="Bignell A."/>
            <person name="Clark L."/>
            <person name="Harris B."/>
            <person name="Ormond D."/>
            <person name="Abdellah Z."/>
            <person name="Brooks K."/>
            <person name="Cherevach I."/>
            <person name="Chillingworth T."/>
            <person name="Woodward J."/>
            <person name="Norberczak H."/>
            <person name="Lord A."/>
            <person name="Arrowsmith C."/>
            <person name="Jagels K."/>
            <person name="Moule S."/>
            <person name="Mungall K."/>
            <person name="Saunders M."/>
            <person name="Whitehead S."/>
            <person name="Chabalgoity J.A."/>
            <person name="Maskell D."/>
            <person name="Humphreys T."/>
            <person name="Roberts M."/>
            <person name="Barrow P.A."/>
            <person name="Dougan G."/>
            <person name="Parkhill J."/>
        </authorList>
    </citation>
    <scope>NUCLEOTIDE SEQUENCE [LARGE SCALE GENOMIC DNA]</scope>
    <source>
        <strain>287/91 / NCTC 13346</strain>
    </source>
</reference>
<accession>B5RAK1</accession>